<evidence type="ECO:0000255" key="1"/>
<evidence type="ECO:0000256" key="2">
    <source>
        <dbReference type="SAM" id="MobiDB-lite"/>
    </source>
</evidence>
<evidence type="ECO:0000305" key="3"/>
<reference key="1">
    <citation type="journal article" date="2006" name="Nature">
        <title>Analysis of the DNA sequence and duplication history of human chromosome 15.</title>
        <authorList>
            <person name="Zody M.C."/>
            <person name="Garber M."/>
            <person name="Sharpe T."/>
            <person name="Young S.K."/>
            <person name="Rowen L."/>
            <person name="O'Neill K."/>
            <person name="Whittaker C.A."/>
            <person name="Kamal M."/>
            <person name="Chang J.L."/>
            <person name="Cuomo C.A."/>
            <person name="Dewar K."/>
            <person name="FitzGerald M.G."/>
            <person name="Kodira C.D."/>
            <person name="Madan A."/>
            <person name="Qin S."/>
            <person name="Yang X."/>
            <person name="Abbasi N."/>
            <person name="Abouelleil A."/>
            <person name="Arachchi H.M."/>
            <person name="Baradarani L."/>
            <person name="Birditt B."/>
            <person name="Bloom S."/>
            <person name="Bloom T."/>
            <person name="Borowsky M.L."/>
            <person name="Burke J."/>
            <person name="Butler J."/>
            <person name="Cook A."/>
            <person name="DeArellano K."/>
            <person name="DeCaprio D."/>
            <person name="Dorris L. III"/>
            <person name="Dors M."/>
            <person name="Eichler E.E."/>
            <person name="Engels R."/>
            <person name="Fahey J."/>
            <person name="Fleetwood P."/>
            <person name="Friedman C."/>
            <person name="Gearin G."/>
            <person name="Hall J.L."/>
            <person name="Hensley G."/>
            <person name="Johnson E."/>
            <person name="Jones C."/>
            <person name="Kamat A."/>
            <person name="Kaur A."/>
            <person name="Locke D.P."/>
            <person name="Madan A."/>
            <person name="Munson G."/>
            <person name="Jaffe D.B."/>
            <person name="Lui A."/>
            <person name="Macdonald P."/>
            <person name="Mauceli E."/>
            <person name="Naylor J.W."/>
            <person name="Nesbitt R."/>
            <person name="Nicol R."/>
            <person name="O'Leary S.B."/>
            <person name="Ratcliffe A."/>
            <person name="Rounsley S."/>
            <person name="She X."/>
            <person name="Sneddon K.M.B."/>
            <person name="Stewart S."/>
            <person name="Sougnez C."/>
            <person name="Stone S.M."/>
            <person name="Topham K."/>
            <person name="Vincent D."/>
            <person name="Wang S."/>
            <person name="Zimmer A.R."/>
            <person name="Birren B.W."/>
            <person name="Hood L."/>
            <person name="Lander E.S."/>
            <person name="Nusbaum C."/>
        </authorList>
    </citation>
    <scope>NUCLEOTIDE SEQUENCE [LARGE SCALE GENOMIC DNA]</scope>
</reference>
<keyword id="KW-0175">Coiled coil</keyword>
<keyword id="KW-1185">Reference proteome</keyword>
<name>GG6LS_HUMAN</name>
<dbReference type="EMBL" id="AC011295">
    <property type="status" value="NOT_ANNOTATED_CDS"/>
    <property type="molecule type" value="Genomic_DNA"/>
</dbReference>
<dbReference type="RefSeq" id="XP_006725247.1">
    <property type="nucleotide sequence ID" value="XM_006725184.3"/>
</dbReference>
<dbReference type="SMR" id="H0YKK7"/>
<dbReference type="iPTMnet" id="H0YKK7"/>
<dbReference type="PhosphoSitePlus" id="H0YKK7"/>
<dbReference type="BioMuta" id="HGNC:49416"/>
<dbReference type="jPOST" id="H0YKK7"/>
<dbReference type="MassIVE" id="H0YKK7"/>
<dbReference type="AGR" id="HGNC:49416"/>
<dbReference type="GeneCards" id="GOLGA6L19"/>
<dbReference type="HGNC" id="HGNC:49416">
    <property type="gene designation" value="GOLGA6L19"/>
</dbReference>
<dbReference type="neXtProt" id="NX_H0YKK7"/>
<dbReference type="InParanoid" id="H0YKK7"/>
<dbReference type="PAN-GO" id="H0YKK7">
    <property type="GO annotations" value="0 GO annotations based on evolutionary models"/>
</dbReference>
<dbReference type="PhylomeDB" id="H0YKK7"/>
<dbReference type="TreeFam" id="TF316990"/>
<dbReference type="BioGRID-ORCS" id="101927601">
    <property type="hits" value="8 hits in 36 CRISPR screens"/>
</dbReference>
<dbReference type="Pharos" id="H0YKK7">
    <property type="development level" value="Tdark"/>
</dbReference>
<dbReference type="Proteomes" id="UP000005640">
    <property type="component" value="Unplaced"/>
</dbReference>
<dbReference type="RNAct" id="H0YKK7">
    <property type="molecule type" value="protein"/>
</dbReference>
<dbReference type="InterPro" id="IPR026737">
    <property type="entry name" value="GOLGA6L"/>
</dbReference>
<dbReference type="InterPro" id="IPR043976">
    <property type="entry name" value="GOLGA_cons_dom"/>
</dbReference>
<dbReference type="PANTHER" id="PTHR23143:SF19">
    <property type="entry name" value="GOLGIN SUBFAMILY A MEMBER 6-LIKE PROTEIN 10-RELATED"/>
    <property type="match status" value="1"/>
</dbReference>
<dbReference type="PANTHER" id="PTHR23143">
    <property type="entry name" value="TRICHOHYALIN-RELATED"/>
    <property type="match status" value="1"/>
</dbReference>
<dbReference type="Pfam" id="PF15070">
    <property type="entry name" value="GOLGA2L5"/>
    <property type="match status" value="1"/>
</dbReference>
<feature type="chain" id="PRO_0000425153" description="Putative golgin subfamily A member 6-like protein 19">
    <location>
        <begin position="1"/>
        <end position="550"/>
    </location>
</feature>
<feature type="region of interest" description="Disordered" evidence="2">
    <location>
        <begin position="1"/>
        <end position="77"/>
    </location>
</feature>
<feature type="region of interest" description="Disordered" evidence="2">
    <location>
        <begin position="467"/>
        <end position="529"/>
    </location>
</feature>
<feature type="coiled-coil region" evidence="1">
    <location>
        <begin position="157"/>
        <end position="405"/>
    </location>
</feature>
<feature type="compositionally biased region" description="Pro residues" evidence="2">
    <location>
        <begin position="1"/>
        <end position="11"/>
    </location>
</feature>
<feature type="compositionally biased region" description="Polar residues" evidence="2">
    <location>
        <begin position="51"/>
        <end position="62"/>
    </location>
</feature>
<feature type="compositionally biased region" description="Basic and acidic residues" evidence="2">
    <location>
        <begin position="467"/>
        <end position="480"/>
    </location>
</feature>
<feature type="compositionally biased region" description="Low complexity" evidence="2">
    <location>
        <begin position="484"/>
        <end position="499"/>
    </location>
</feature>
<feature type="compositionally biased region" description="Low complexity" evidence="2">
    <location>
        <begin position="517"/>
        <end position="529"/>
    </location>
</feature>
<sequence>MWPQPRLPPHPAMSEKTQQGKLAAAKKKLKAYWQRKSPGIPAGANRKKKVNGSSPDTATSGGYHSPGDSATGVYGEGRASSTTLQDLESQYQELAVALDSSSAIISQLTENINSLVRTSKEEKKHEIHLVQKLGRSLFKLKNQTAEPLAPEPPAGPSKVEQLQDETNHLRKELESVGRQLQAEVENNQMLSLLNRRQEERLREQEERLHEQEERLHEQEERLCEQEERLREQEERLCEQEERLREQEERLCEQEERLREQEERLCEQEERLREQEERLCEQEERLREQEERLCEQEERLREQEERLCEQEERLREQEERLCEQEERLCEQEERLCEQEERLCEQEERLCEQEKLPGQERLLEEVEKLLEQERRQEEQERLLERERLLDEVEELLEQERLRQQDERLWQQETLRELERLRELERLRELERMLELGWEALYEQRAEPRSGFEELNNENKSTLQLEQQVKELEKSGGAEEPRGSESAAAARPVPGAPVPQGAWMCGQAGWTPQEHPGLSGEAVGTGEAAGGAEEAACHSFRAAENRELNITII</sequence>
<accession>H0YKK7</accession>
<proteinExistence type="uncertain"/>
<protein>
    <recommendedName>
        <fullName>Putative golgin subfamily A member 6-like protein 19</fullName>
    </recommendedName>
</protein>
<gene>
    <name type="primary">GOLGA6L19</name>
</gene>
<organism>
    <name type="scientific">Homo sapiens</name>
    <name type="common">Human</name>
    <dbReference type="NCBI Taxonomy" id="9606"/>
    <lineage>
        <taxon>Eukaryota</taxon>
        <taxon>Metazoa</taxon>
        <taxon>Chordata</taxon>
        <taxon>Craniata</taxon>
        <taxon>Vertebrata</taxon>
        <taxon>Euteleostomi</taxon>
        <taxon>Mammalia</taxon>
        <taxon>Eutheria</taxon>
        <taxon>Euarchontoglires</taxon>
        <taxon>Primates</taxon>
        <taxon>Haplorrhini</taxon>
        <taxon>Catarrhini</taxon>
        <taxon>Hominidae</taxon>
        <taxon>Homo</taxon>
    </lineage>
</organism>
<comment type="similarity">
    <text evidence="3">Belongs to the GOLGA6 family.</text>
</comment>
<comment type="caution">
    <text evidence="3">Could be the product of a pseudogene.</text>
</comment>